<protein>
    <recommendedName>
        <fullName evidence="1">N-acetylmuramic acid 6-phosphate etherase</fullName>
        <shortName evidence="1">MurNAc-6-P etherase</shortName>
        <ecNumber evidence="1">4.2.1.126</ecNumber>
    </recommendedName>
    <alternativeName>
        <fullName evidence="1">N-acetylmuramic acid 6-phosphate hydrolase</fullName>
    </alternativeName>
    <alternativeName>
        <fullName evidence="1">N-acetylmuramic acid 6-phosphate lyase</fullName>
    </alternativeName>
</protein>
<proteinExistence type="inferred from homology"/>
<gene>
    <name evidence="1" type="primary">murQ</name>
    <name type="ordered locus">SSPA0279</name>
</gene>
<name>MURQ_SALPK</name>
<accession>B5BAU0</accession>
<organism>
    <name type="scientific">Salmonella paratyphi A (strain AKU_12601)</name>
    <dbReference type="NCBI Taxonomy" id="554290"/>
    <lineage>
        <taxon>Bacteria</taxon>
        <taxon>Pseudomonadati</taxon>
        <taxon>Pseudomonadota</taxon>
        <taxon>Gammaproteobacteria</taxon>
        <taxon>Enterobacterales</taxon>
        <taxon>Enterobacteriaceae</taxon>
        <taxon>Salmonella</taxon>
    </lineage>
</organism>
<reference key="1">
    <citation type="journal article" date="2009" name="BMC Genomics">
        <title>Pseudogene accumulation in the evolutionary histories of Salmonella enterica serovars Paratyphi A and Typhi.</title>
        <authorList>
            <person name="Holt K.E."/>
            <person name="Thomson N.R."/>
            <person name="Wain J."/>
            <person name="Langridge G.C."/>
            <person name="Hasan R."/>
            <person name="Bhutta Z.A."/>
            <person name="Quail M.A."/>
            <person name="Norbertczak H."/>
            <person name="Walker D."/>
            <person name="Simmonds M."/>
            <person name="White B."/>
            <person name="Bason N."/>
            <person name="Mungall K."/>
            <person name="Dougan G."/>
            <person name="Parkhill J."/>
        </authorList>
    </citation>
    <scope>NUCLEOTIDE SEQUENCE [LARGE SCALE GENOMIC DNA]</scope>
    <source>
        <strain>AKU_12601</strain>
    </source>
</reference>
<dbReference type="EC" id="4.2.1.126" evidence="1"/>
<dbReference type="EMBL" id="FM200053">
    <property type="protein sequence ID" value="CAR58394.1"/>
    <property type="molecule type" value="Genomic_DNA"/>
</dbReference>
<dbReference type="RefSeq" id="WP_001048530.1">
    <property type="nucleotide sequence ID" value="NC_011147.1"/>
</dbReference>
<dbReference type="SMR" id="B5BAU0"/>
<dbReference type="KEGG" id="sek:SSPA0279"/>
<dbReference type="HOGENOM" id="CLU_049049_1_1_6"/>
<dbReference type="UniPathway" id="UPA00342"/>
<dbReference type="UniPathway" id="UPA00343"/>
<dbReference type="UniPathway" id="UPA00544"/>
<dbReference type="Proteomes" id="UP000001869">
    <property type="component" value="Chromosome"/>
</dbReference>
<dbReference type="GO" id="GO:0097367">
    <property type="term" value="F:carbohydrate derivative binding"/>
    <property type="evidence" value="ECO:0007669"/>
    <property type="project" value="InterPro"/>
</dbReference>
<dbReference type="GO" id="GO:0016835">
    <property type="term" value="F:carbon-oxygen lyase activity"/>
    <property type="evidence" value="ECO:0007669"/>
    <property type="project" value="UniProtKB-UniRule"/>
</dbReference>
<dbReference type="GO" id="GO:0016803">
    <property type="term" value="F:ether hydrolase activity"/>
    <property type="evidence" value="ECO:0007669"/>
    <property type="project" value="TreeGrafter"/>
</dbReference>
<dbReference type="GO" id="GO:0097175">
    <property type="term" value="P:1,6-anhydro-N-acetyl-beta-muramic acid catabolic process"/>
    <property type="evidence" value="ECO:0007669"/>
    <property type="project" value="UniProtKB-UniRule"/>
</dbReference>
<dbReference type="GO" id="GO:0046348">
    <property type="term" value="P:amino sugar catabolic process"/>
    <property type="evidence" value="ECO:0007669"/>
    <property type="project" value="InterPro"/>
</dbReference>
<dbReference type="GO" id="GO:0097173">
    <property type="term" value="P:N-acetylmuramic acid catabolic process"/>
    <property type="evidence" value="ECO:0007669"/>
    <property type="project" value="UniProtKB-UniPathway"/>
</dbReference>
<dbReference type="GO" id="GO:0009254">
    <property type="term" value="P:peptidoglycan turnover"/>
    <property type="evidence" value="ECO:0007669"/>
    <property type="project" value="UniProtKB-UniRule"/>
</dbReference>
<dbReference type="CDD" id="cd05007">
    <property type="entry name" value="SIS_Etherase"/>
    <property type="match status" value="1"/>
</dbReference>
<dbReference type="FunFam" id="1.10.8.1080:FF:000001">
    <property type="entry name" value="N-acetylmuramic acid 6-phosphate etherase"/>
    <property type="match status" value="1"/>
</dbReference>
<dbReference type="FunFam" id="3.40.50.10490:FF:000014">
    <property type="entry name" value="N-acetylmuramic acid 6-phosphate etherase"/>
    <property type="match status" value="1"/>
</dbReference>
<dbReference type="Gene3D" id="1.10.8.1080">
    <property type="match status" value="1"/>
</dbReference>
<dbReference type="Gene3D" id="3.40.50.10490">
    <property type="entry name" value="Glucose-6-phosphate isomerase like protein, domain 1"/>
    <property type="match status" value="1"/>
</dbReference>
<dbReference type="HAMAP" id="MF_00068">
    <property type="entry name" value="MurQ"/>
    <property type="match status" value="1"/>
</dbReference>
<dbReference type="InterPro" id="IPR005488">
    <property type="entry name" value="Etherase_MurQ"/>
</dbReference>
<dbReference type="InterPro" id="IPR005486">
    <property type="entry name" value="Glucokinase_regulatory_CS"/>
</dbReference>
<dbReference type="InterPro" id="IPR040190">
    <property type="entry name" value="MURQ/GCKR"/>
</dbReference>
<dbReference type="InterPro" id="IPR001347">
    <property type="entry name" value="SIS_dom"/>
</dbReference>
<dbReference type="InterPro" id="IPR046348">
    <property type="entry name" value="SIS_dom_sf"/>
</dbReference>
<dbReference type="NCBIfam" id="TIGR00274">
    <property type="entry name" value="N-acetylmuramic acid 6-phosphate etherase"/>
    <property type="match status" value="1"/>
</dbReference>
<dbReference type="NCBIfam" id="NF003915">
    <property type="entry name" value="PRK05441.1"/>
    <property type="match status" value="1"/>
</dbReference>
<dbReference type="NCBIfam" id="NF009222">
    <property type="entry name" value="PRK12570.1"/>
    <property type="match status" value="1"/>
</dbReference>
<dbReference type="PANTHER" id="PTHR10088">
    <property type="entry name" value="GLUCOKINASE REGULATORY PROTEIN"/>
    <property type="match status" value="1"/>
</dbReference>
<dbReference type="PANTHER" id="PTHR10088:SF5">
    <property type="entry name" value="N-ACETYLMURAMIC ACID 6-PHOSPHATE ETHERASE"/>
    <property type="match status" value="1"/>
</dbReference>
<dbReference type="Pfam" id="PF22645">
    <property type="entry name" value="GKRP_SIS_N"/>
    <property type="match status" value="1"/>
</dbReference>
<dbReference type="SUPFAM" id="SSF53697">
    <property type="entry name" value="SIS domain"/>
    <property type="match status" value="1"/>
</dbReference>
<dbReference type="PROSITE" id="PS01272">
    <property type="entry name" value="GCKR"/>
    <property type="match status" value="1"/>
</dbReference>
<dbReference type="PROSITE" id="PS51464">
    <property type="entry name" value="SIS"/>
    <property type="match status" value="1"/>
</dbReference>
<comment type="function">
    <text evidence="1">Specifically catalyzes the cleavage of the D-lactyl ether substituent of MurNAc 6-phosphate, producing GlcNAc 6-phosphate and D-lactate. Together with AnmK, is also required for the utilization of anhydro-N-acetylmuramic acid (anhMurNAc) either imported from the medium or derived from its own cell wall murein, and thus plays a role in cell wall recycling.</text>
</comment>
<comment type="catalytic activity">
    <reaction evidence="1">
        <text>N-acetyl-D-muramate 6-phosphate + H2O = N-acetyl-D-glucosamine 6-phosphate + (R)-lactate</text>
        <dbReference type="Rhea" id="RHEA:26410"/>
        <dbReference type="ChEBI" id="CHEBI:15377"/>
        <dbReference type="ChEBI" id="CHEBI:16004"/>
        <dbReference type="ChEBI" id="CHEBI:57513"/>
        <dbReference type="ChEBI" id="CHEBI:58722"/>
        <dbReference type="EC" id="4.2.1.126"/>
    </reaction>
</comment>
<comment type="pathway">
    <text evidence="1">Amino-sugar metabolism; 1,6-anhydro-N-acetylmuramate degradation.</text>
</comment>
<comment type="pathway">
    <text evidence="1">Amino-sugar metabolism; N-acetylmuramate degradation.</text>
</comment>
<comment type="pathway">
    <text evidence="1">Cell wall biogenesis; peptidoglycan recycling.</text>
</comment>
<comment type="subunit">
    <text evidence="1">Homodimer.</text>
</comment>
<comment type="induction">
    <text evidence="1">Induced by MurNAc 6-phosphate that releases the repressor MurR from the DNA. Repressed by MurR in the absence of MurNAc 6-phosphate.</text>
</comment>
<comment type="miscellaneous">
    <text evidence="1">A lyase-type mechanism (elimination/hydration) is suggested for the cleavage of the lactyl ether bond of MurNAc 6-phosphate, with the formation of an alpha,beta-unsaturated aldehyde intermediate with (E)-stereochemistry, followed by the syn addition of water to give product.</text>
</comment>
<comment type="similarity">
    <text evidence="1">Belongs to the GCKR-like family. MurNAc-6-P etherase subfamily.</text>
</comment>
<keyword id="KW-0119">Carbohydrate metabolism</keyword>
<keyword id="KW-0456">Lyase</keyword>
<feature type="chain" id="PRO_1000092317" description="N-acetylmuramic acid 6-phosphate etherase">
    <location>
        <begin position="1"/>
        <end position="297"/>
    </location>
</feature>
<feature type="domain" description="SIS" evidence="1">
    <location>
        <begin position="55"/>
        <end position="218"/>
    </location>
</feature>
<feature type="active site" description="Proton donor" evidence="1">
    <location>
        <position position="83"/>
    </location>
</feature>
<feature type="active site" evidence="1">
    <location>
        <position position="114"/>
    </location>
</feature>
<evidence type="ECO:0000255" key="1">
    <source>
        <dbReference type="HAMAP-Rule" id="MF_00068"/>
    </source>
</evidence>
<sequence>MNLGTLVSETRNPQTMDLDALPTPELVKRFNEQDTLVAEAVKATLPDVARAVDAAAAALKSGGRIIYMGAGTSGRLGVLDASECPPTFGVPHGLVVGLIAGGPGALLKAVEGAEDSQQAGEDDLVALNLQEQDLVVGLAASGRTPYVIGGLRYARQSGCTTVAVSCNPDSPIAREANIAISPVVGPEALTGSTRLKSGTAQKMVLNMISTGAMVKFGKVYQNLMVDMKATNVKLVDRACRMVVEATGIGREEAEALLKQTDFEVKPAILMALTGLDAAAAREKLAAHQGFLRAALEH</sequence>